<accession>A5UH36</accession>
<organism>
    <name type="scientific">Haemophilus influenzae (strain PittGG)</name>
    <dbReference type="NCBI Taxonomy" id="374931"/>
    <lineage>
        <taxon>Bacteria</taxon>
        <taxon>Pseudomonadati</taxon>
        <taxon>Pseudomonadota</taxon>
        <taxon>Gammaproteobacteria</taxon>
        <taxon>Pasteurellales</taxon>
        <taxon>Pasteurellaceae</taxon>
        <taxon>Haemophilus</taxon>
    </lineage>
</organism>
<protein>
    <recommendedName>
        <fullName evidence="1">Small ribosomal subunit protein bS21</fullName>
    </recommendedName>
    <alternativeName>
        <fullName evidence="3">30S ribosomal protein S21</fullName>
    </alternativeName>
</protein>
<feature type="chain" id="PRO_1000005119" description="Small ribosomal subunit protein bS21">
    <location>
        <begin position="1"/>
        <end position="71"/>
    </location>
</feature>
<feature type="region of interest" description="Disordered" evidence="2">
    <location>
        <begin position="48"/>
        <end position="71"/>
    </location>
</feature>
<feature type="compositionally biased region" description="Basic and acidic residues" evidence="2">
    <location>
        <begin position="60"/>
        <end position="71"/>
    </location>
</feature>
<dbReference type="EMBL" id="CP000672">
    <property type="protein sequence ID" value="ABR00092.1"/>
    <property type="molecule type" value="Genomic_DNA"/>
</dbReference>
<dbReference type="SMR" id="A5UH36"/>
<dbReference type="KEGG" id="hiq:CGSHiGG_05905"/>
<dbReference type="HOGENOM" id="CLU_159258_1_0_6"/>
<dbReference type="Proteomes" id="UP000001990">
    <property type="component" value="Chromosome"/>
</dbReference>
<dbReference type="GO" id="GO:1990904">
    <property type="term" value="C:ribonucleoprotein complex"/>
    <property type="evidence" value="ECO:0007669"/>
    <property type="project" value="UniProtKB-KW"/>
</dbReference>
<dbReference type="GO" id="GO:0005840">
    <property type="term" value="C:ribosome"/>
    <property type="evidence" value="ECO:0007669"/>
    <property type="project" value="UniProtKB-KW"/>
</dbReference>
<dbReference type="GO" id="GO:0003735">
    <property type="term" value="F:structural constituent of ribosome"/>
    <property type="evidence" value="ECO:0007669"/>
    <property type="project" value="InterPro"/>
</dbReference>
<dbReference type="GO" id="GO:0006412">
    <property type="term" value="P:translation"/>
    <property type="evidence" value="ECO:0007669"/>
    <property type="project" value="UniProtKB-UniRule"/>
</dbReference>
<dbReference type="Gene3D" id="1.20.5.1150">
    <property type="entry name" value="Ribosomal protein S8"/>
    <property type="match status" value="1"/>
</dbReference>
<dbReference type="HAMAP" id="MF_00358">
    <property type="entry name" value="Ribosomal_bS21"/>
    <property type="match status" value="1"/>
</dbReference>
<dbReference type="InterPro" id="IPR001911">
    <property type="entry name" value="Ribosomal_bS21"/>
</dbReference>
<dbReference type="InterPro" id="IPR018278">
    <property type="entry name" value="Ribosomal_bS21_CS"/>
</dbReference>
<dbReference type="InterPro" id="IPR038380">
    <property type="entry name" value="Ribosomal_bS21_sf"/>
</dbReference>
<dbReference type="NCBIfam" id="TIGR00030">
    <property type="entry name" value="S21p"/>
    <property type="match status" value="1"/>
</dbReference>
<dbReference type="PANTHER" id="PTHR21109">
    <property type="entry name" value="MITOCHONDRIAL 28S RIBOSOMAL PROTEIN S21"/>
    <property type="match status" value="1"/>
</dbReference>
<dbReference type="PANTHER" id="PTHR21109:SF22">
    <property type="entry name" value="SMALL RIBOSOMAL SUBUNIT PROTEIN BS21"/>
    <property type="match status" value="1"/>
</dbReference>
<dbReference type="Pfam" id="PF01165">
    <property type="entry name" value="Ribosomal_S21"/>
    <property type="match status" value="1"/>
</dbReference>
<dbReference type="PRINTS" id="PR00976">
    <property type="entry name" value="RIBOSOMALS21"/>
</dbReference>
<dbReference type="PROSITE" id="PS01181">
    <property type="entry name" value="RIBOSOMAL_S21"/>
    <property type="match status" value="1"/>
</dbReference>
<evidence type="ECO:0000255" key="1">
    <source>
        <dbReference type="HAMAP-Rule" id="MF_00358"/>
    </source>
</evidence>
<evidence type="ECO:0000256" key="2">
    <source>
        <dbReference type="SAM" id="MobiDB-lite"/>
    </source>
</evidence>
<evidence type="ECO:0000305" key="3"/>
<comment type="similarity">
    <text evidence="1">Belongs to the bacterial ribosomal protein bS21 family.</text>
</comment>
<name>RS21_HAEIG</name>
<sequence length="71" mass="8462">MPVIKVRENESFDVALRRFKRSCEKAGILAEVRAREFYEKPTTIRKRENATLAKRHAKRNARENARNTRLY</sequence>
<proteinExistence type="inferred from homology"/>
<reference key="1">
    <citation type="journal article" date="2007" name="Genome Biol.">
        <title>Characterization and modeling of the Haemophilus influenzae core and supragenomes based on the complete genomic sequences of Rd and 12 clinical nontypeable strains.</title>
        <authorList>
            <person name="Hogg J.S."/>
            <person name="Hu F.Z."/>
            <person name="Janto B."/>
            <person name="Boissy R."/>
            <person name="Hayes J."/>
            <person name="Keefe R."/>
            <person name="Post J.C."/>
            <person name="Ehrlich G.D."/>
        </authorList>
    </citation>
    <scope>NUCLEOTIDE SEQUENCE [LARGE SCALE GENOMIC DNA]</scope>
    <source>
        <strain>PittGG</strain>
    </source>
</reference>
<keyword id="KW-0687">Ribonucleoprotein</keyword>
<keyword id="KW-0689">Ribosomal protein</keyword>
<gene>
    <name evidence="1" type="primary">rpsU</name>
    <name type="ordered locus">CGSHiGG_05905</name>
</gene>